<name>MNMG_PROM0</name>
<proteinExistence type="inferred from homology"/>
<evidence type="ECO:0000255" key="1">
    <source>
        <dbReference type="HAMAP-Rule" id="MF_00129"/>
    </source>
</evidence>
<accession>A3PFG3</accession>
<dbReference type="EMBL" id="CP000576">
    <property type="protein sequence ID" value="ABO18488.1"/>
    <property type="molecule type" value="Genomic_DNA"/>
</dbReference>
<dbReference type="RefSeq" id="WP_011863770.1">
    <property type="nucleotide sequence ID" value="NC_009091.1"/>
</dbReference>
<dbReference type="SMR" id="A3PFG3"/>
<dbReference type="STRING" id="167546.P9301_18651"/>
<dbReference type="KEGG" id="pmg:P9301_18651"/>
<dbReference type="eggNOG" id="COG0445">
    <property type="taxonomic scope" value="Bacteria"/>
</dbReference>
<dbReference type="HOGENOM" id="CLU_007831_2_2_3"/>
<dbReference type="OrthoDB" id="9815560at2"/>
<dbReference type="Proteomes" id="UP000001430">
    <property type="component" value="Chromosome"/>
</dbReference>
<dbReference type="GO" id="GO:0005737">
    <property type="term" value="C:cytoplasm"/>
    <property type="evidence" value="ECO:0007669"/>
    <property type="project" value="UniProtKB-SubCell"/>
</dbReference>
<dbReference type="GO" id="GO:0050660">
    <property type="term" value="F:flavin adenine dinucleotide binding"/>
    <property type="evidence" value="ECO:0007669"/>
    <property type="project" value="UniProtKB-UniRule"/>
</dbReference>
<dbReference type="GO" id="GO:0030488">
    <property type="term" value="P:tRNA methylation"/>
    <property type="evidence" value="ECO:0007669"/>
    <property type="project" value="TreeGrafter"/>
</dbReference>
<dbReference type="GO" id="GO:0002098">
    <property type="term" value="P:tRNA wobble uridine modification"/>
    <property type="evidence" value="ECO:0007669"/>
    <property type="project" value="InterPro"/>
</dbReference>
<dbReference type="FunFam" id="1.10.10.1800:FF:000001">
    <property type="entry name" value="tRNA uridine 5-carboxymethylaminomethyl modification enzyme MnmG"/>
    <property type="match status" value="1"/>
</dbReference>
<dbReference type="FunFam" id="1.10.150.570:FF:000001">
    <property type="entry name" value="tRNA uridine 5-carboxymethylaminomethyl modification enzyme MnmG"/>
    <property type="match status" value="1"/>
</dbReference>
<dbReference type="FunFam" id="3.50.50.60:FF:000094">
    <property type="entry name" value="tRNA uridine 5-carboxymethylaminomethyl modification enzyme MnmG"/>
    <property type="match status" value="1"/>
</dbReference>
<dbReference type="Gene3D" id="3.50.50.60">
    <property type="entry name" value="FAD/NAD(P)-binding domain"/>
    <property type="match status" value="2"/>
</dbReference>
<dbReference type="Gene3D" id="1.10.150.570">
    <property type="entry name" value="GidA associated domain, C-terminal subdomain"/>
    <property type="match status" value="1"/>
</dbReference>
<dbReference type="Gene3D" id="1.10.10.1800">
    <property type="entry name" value="tRNA uridine 5-carboxymethylaminomethyl modification enzyme MnmG/GidA"/>
    <property type="match status" value="1"/>
</dbReference>
<dbReference type="HAMAP" id="MF_00129">
    <property type="entry name" value="MnmG_GidA"/>
    <property type="match status" value="1"/>
</dbReference>
<dbReference type="InterPro" id="IPR036188">
    <property type="entry name" value="FAD/NAD-bd_sf"/>
</dbReference>
<dbReference type="InterPro" id="IPR049312">
    <property type="entry name" value="GIDA_C_N"/>
</dbReference>
<dbReference type="InterPro" id="IPR004416">
    <property type="entry name" value="MnmG"/>
</dbReference>
<dbReference type="InterPro" id="IPR002218">
    <property type="entry name" value="MnmG-rel"/>
</dbReference>
<dbReference type="InterPro" id="IPR020595">
    <property type="entry name" value="MnmG-rel_CS"/>
</dbReference>
<dbReference type="InterPro" id="IPR026904">
    <property type="entry name" value="MnmG_C"/>
</dbReference>
<dbReference type="InterPro" id="IPR047001">
    <property type="entry name" value="MnmG_C_subdom"/>
</dbReference>
<dbReference type="InterPro" id="IPR044920">
    <property type="entry name" value="MnmG_C_subdom_sf"/>
</dbReference>
<dbReference type="InterPro" id="IPR040131">
    <property type="entry name" value="MnmG_N"/>
</dbReference>
<dbReference type="NCBIfam" id="TIGR00136">
    <property type="entry name" value="mnmG_gidA"/>
    <property type="match status" value="1"/>
</dbReference>
<dbReference type="PANTHER" id="PTHR11806">
    <property type="entry name" value="GLUCOSE INHIBITED DIVISION PROTEIN A"/>
    <property type="match status" value="1"/>
</dbReference>
<dbReference type="PANTHER" id="PTHR11806:SF0">
    <property type="entry name" value="PROTEIN MTO1 HOMOLOG, MITOCHONDRIAL"/>
    <property type="match status" value="1"/>
</dbReference>
<dbReference type="Pfam" id="PF01134">
    <property type="entry name" value="GIDA"/>
    <property type="match status" value="1"/>
</dbReference>
<dbReference type="Pfam" id="PF21680">
    <property type="entry name" value="GIDA_C_1st"/>
    <property type="match status" value="1"/>
</dbReference>
<dbReference type="Pfam" id="PF13932">
    <property type="entry name" value="SAM_GIDA_C"/>
    <property type="match status" value="1"/>
</dbReference>
<dbReference type="SMART" id="SM01228">
    <property type="entry name" value="GIDA_assoc_3"/>
    <property type="match status" value="1"/>
</dbReference>
<dbReference type="SUPFAM" id="SSF51905">
    <property type="entry name" value="FAD/NAD(P)-binding domain"/>
    <property type="match status" value="1"/>
</dbReference>
<dbReference type="PROSITE" id="PS01280">
    <property type="entry name" value="GIDA_1"/>
    <property type="match status" value="1"/>
</dbReference>
<dbReference type="PROSITE" id="PS01281">
    <property type="entry name" value="GIDA_2"/>
    <property type="match status" value="1"/>
</dbReference>
<feature type="chain" id="PRO_0000345317" description="tRNA uridine 5-carboxymethylaminomethyl modification enzyme MnmG">
    <location>
        <begin position="1"/>
        <end position="660"/>
    </location>
</feature>
<feature type="binding site" evidence="1">
    <location>
        <begin position="17"/>
        <end position="22"/>
    </location>
    <ligand>
        <name>FAD</name>
        <dbReference type="ChEBI" id="CHEBI:57692"/>
    </ligand>
</feature>
<feature type="binding site" evidence="1">
    <location>
        <begin position="290"/>
        <end position="304"/>
    </location>
    <ligand>
        <name>NAD(+)</name>
        <dbReference type="ChEBI" id="CHEBI:57540"/>
    </ligand>
</feature>
<sequence length="660" mass="74300">MQDHHSTNESFDVIVIGGGHAGCEAAITTAKLGFSTALFTINLDRIAWQPCNPAVGGPAKSQLVHEVDALGGIIGKLADETAIQKRILNASRGPAVWALRAQTDKREYSKKMIEILQNTDNLSLKEAMITELDIAKTEEIGLNSKRTVKKRIKGVRTFFGSYYSARSVIITAGTFLEGRIWIGNKSMSAGRSGEQAAKGLTENLHEIGIKTERLKTGTPARVDKRSIIFDDLDIQPSTAADKYFSFDPDIKNNMPQVSCHITRTTTKTHQLIRDNLHLTPIYGGFIDSKGPRYCPSIEDKIVKFADKESHQIFLEPEGINTPEIYVQGFSTGLPENIQLELLRTLPGLNECKMLRPAYAVEYDYIPATQLQTSLETKEIEYLFSAGQINGTTGYEEAAAQGLVAGVNATRKLSKKDPIIFTRESSYIGTMINDLITKDLKEPYRVLTSRSEYRLTLRGDNADRRLTQLGYQIGLINEKRWSAYQEKMKLLEEEKFRLNKTRLKNTEEISKKIELETGSKIKGSITLKELLKRPDFHYSDLIKYNLTEKNLGSSIQEGVEIDIKYEGYLKRQKNNIEQINRQSCKSLPQEINYEKIETLSLEARENLNKIKPKNFGDASKIPGVSKADLTALLVWLKIREIKKEKANIFIEKKLSSKKHSV</sequence>
<organism>
    <name type="scientific">Prochlorococcus marinus (strain MIT 9301)</name>
    <dbReference type="NCBI Taxonomy" id="167546"/>
    <lineage>
        <taxon>Bacteria</taxon>
        <taxon>Bacillati</taxon>
        <taxon>Cyanobacteriota</taxon>
        <taxon>Cyanophyceae</taxon>
        <taxon>Synechococcales</taxon>
        <taxon>Prochlorococcaceae</taxon>
        <taxon>Prochlorococcus</taxon>
    </lineage>
</organism>
<keyword id="KW-0963">Cytoplasm</keyword>
<keyword id="KW-0274">FAD</keyword>
<keyword id="KW-0285">Flavoprotein</keyword>
<keyword id="KW-0520">NAD</keyword>
<keyword id="KW-1185">Reference proteome</keyword>
<keyword id="KW-0819">tRNA processing</keyword>
<protein>
    <recommendedName>
        <fullName evidence="1">tRNA uridine 5-carboxymethylaminomethyl modification enzyme MnmG</fullName>
    </recommendedName>
    <alternativeName>
        <fullName evidence="1">Glucose-inhibited division protein A</fullName>
    </alternativeName>
</protein>
<comment type="function">
    <text evidence="1">NAD-binding protein involved in the addition of a carboxymethylaminomethyl (cmnm) group at the wobble position (U34) of certain tRNAs, forming tRNA-cmnm(5)s(2)U34.</text>
</comment>
<comment type="cofactor">
    <cofactor evidence="1">
        <name>FAD</name>
        <dbReference type="ChEBI" id="CHEBI:57692"/>
    </cofactor>
</comment>
<comment type="subunit">
    <text evidence="1">Homodimer. Heterotetramer of two MnmE and two MnmG subunits.</text>
</comment>
<comment type="subcellular location">
    <subcellularLocation>
        <location evidence="1">Cytoplasm</location>
    </subcellularLocation>
</comment>
<comment type="similarity">
    <text evidence="1">Belongs to the MnmG family.</text>
</comment>
<gene>
    <name evidence="1" type="primary">mnmG</name>
    <name evidence="1" type="synonym">gidA</name>
    <name type="ordered locus">P9301_18651</name>
</gene>
<reference key="1">
    <citation type="journal article" date="2007" name="PLoS Genet.">
        <title>Patterns and implications of gene gain and loss in the evolution of Prochlorococcus.</title>
        <authorList>
            <person name="Kettler G.C."/>
            <person name="Martiny A.C."/>
            <person name="Huang K."/>
            <person name="Zucker J."/>
            <person name="Coleman M.L."/>
            <person name="Rodrigue S."/>
            <person name="Chen F."/>
            <person name="Lapidus A."/>
            <person name="Ferriera S."/>
            <person name="Johnson J."/>
            <person name="Steglich C."/>
            <person name="Church G.M."/>
            <person name="Richardson P."/>
            <person name="Chisholm S.W."/>
        </authorList>
    </citation>
    <scope>NUCLEOTIDE SEQUENCE [LARGE SCALE GENOMIC DNA]</scope>
    <source>
        <strain>MIT 9301</strain>
    </source>
</reference>